<dbReference type="EC" id="3.1.31.-"/>
<dbReference type="EMBL" id="BX000497">
    <property type="status" value="NOT_ANNOTATED_CDS"/>
    <property type="molecule type" value="Genomic_DNA"/>
</dbReference>
<dbReference type="EMBL" id="DP000010">
    <property type="protein sequence ID" value="ABA91143.1"/>
    <property type="molecule type" value="Genomic_DNA"/>
</dbReference>
<dbReference type="EMBL" id="AP008217">
    <property type="protein sequence ID" value="BAF27398.1"/>
    <property type="status" value="ALT_SEQ"/>
    <property type="molecule type" value="Genomic_DNA"/>
</dbReference>
<dbReference type="EMBL" id="AP014967">
    <property type="status" value="NOT_ANNOTATED_CDS"/>
    <property type="molecule type" value="Genomic_DNA"/>
</dbReference>
<dbReference type="EMBL" id="CM000148">
    <property type="protein sequence ID" value="EAZ17165.1"/>
    <property type="molecule type" value="Genomic_DNA"/>
</dbReference>
<dbReference type="EMBL" id="AK064326">
    <property type="status" value="NOT_ANNOTATED_CDS"/>
    <property type="molecule type" value="mRNA"/>
</dbReference>
<dbReference type="RefSeq" id="XP_015615191.1">
    <property type="nucleotide sequence ID" value="XM_015759705.1"/>
</dbReference>
<dbReference type="SMR" id="Q2RBJ2"/>
<dbReference type="FunCoup" id="Q2RBJ2">
    <property type="interactions" value="2"/>
</dbReference>
<dbReference type="STRING" id="39947.Q2RBJ2"/>
<dbReference type="PaxDb" id="39947-Q2RBJ2"/>
<dbReference type="KEGG" id="dosa:Os11g0109500"/>
<dbReference type="eggNOG" id="ENOG502QT2R">
    <property type="taxonomic scope" value="Eukaryota"/>
</dbReference>
<dbReference type="HOGENOM" id="CLU_046484_1_0_1"/>
<dbReference type="InParanoid" id="Q2RBJ2"/>
<dbReference type="OrthoDB" id="430293at2759"/>
<dbReference type="Proteomes" id="UP000000763">
    <property type="component" value="Chromosome 11"/>
</dbReference>
<dbReference type="Proteomes" id="UP000007752">
    <property type="component" value="Chromosome 11"/>
</dbReference>
<dbReference type="Proteomes" id="UP000059680">
    <property type="component" value="Chromosome 11"/>
</dbReference>
<dbReference type="GO" id="GO:0005886">
    <property type="term" value="C:plasma membrane"/>
    <property type="evidence" value="ECO:0007669"/>
    <property type="project" value="UniProtKB-SubCell"/>
</dbReference>
<dbReference type="GO" id="GO:0004519">
    <property type="term" value="F:endonuclease activity"/>
    <property type="evidence" value="ECO:0007669"/>
    <property type="project" value="UniProtKB-KW"/>
</dbReference>
<dbReference type="GO" id="GO:0046872">
    <property type="term" value="F:metal ion binding"/>
    <property type="evidence" value="ECO:0007669"/>
    <property type="project" value="UniProtKB-KW"/>
</dbReference>
<dbReference type="Gene3D" id="2.40.50.90">
    <property type="match status" value="1"/>
</dbReference>
<dbReference type="Gene3D" id="1.20.120.1910">
    <property type="entry name" value="Cysteine-tRNA ligase, C-terminal anti-codon recognition domain"/>
    <property type="match status" value="1"/>
</dbReference>
<dbReference type="InterPro" id="IPR035437">
    <property type="entry name" value="SNase_OB-fold_sf"/>
</dbReference>
<dbReference type="InterPro" id="IPR016071">
    <property type="entry name" value="Staphylococal_nuclease_OB-fold"/>
</dbReference>
<dbReference type="PANTHER" id="PTHR12302">
    <property type="entry name" value="EBNA2 BINDING PROTEIN P100"/>
    <property type="match status" value="1"/>
</dbReference>
<dbReference type="PANTHER" id="PTHR12302:SF17">
    <property type="entry name" value="STAPHYLOCOCCAL-LIKE NUCLEASE CAN3-RELATED"/>
    <property type="match status" value="1"/>
</dbReference>
<dbReference type="Pfam" id="PF00565">
    <property type="entry name" value="SNase"/>
    <property type="match status" value="1"/>
</dbReference>
<dbReference type="SMART" id="SM00318">
    <property type="entry name" value="SNc"/>
    <property type="match status" value="1"/>
</dbReference>
<dbReference type="SUPFAM" id="SSF50199">
    <property type="entry name" value="Staphylococcal nuclease"/>
    <property type="match status" value="1"/>
</dbReference>
<dbReference type="PROSITE" id="PS50830">
    <property type="entry name" value="TNASE_3"/>
    <property type="match status" value="1"/>
</dbReference>
<protein>
    <recommendedName>
        <fullName>Probable staphylococcal-like nuclease CAN2</fullName>
        <ecNumber>3.1.31.-</ecNumber>
    </recommendedName>
    <alternativeName>
        <fullName>Calcium-dependent nuclease 2</fullName>
        <shortName>Ca(2+)-dependent nuclease 2</shortName>
    </alternativeName>
</protein>
<accession>Q2RBJ2</accession>
<accession>Q0IV67</accession>
<comment type="function">
    <text evidence="1">Enzyme that catalyzes the hydrolysis of both DNA and RNA at the 5' position of the phosphodiester bond.</text>
</comment>
<comment type="cofactor">
    <cofactor evidence="1">
        <name>Ca(2+)</name>
        <dbReference type="ChEBI" id="CHEBI:29108"/>
    </cofactor>
    <text evidence="1">Binds 1 Ca(2+) ion per subunit.</text>
</comment>
<comment type="subcellular location">
    <subcellularLocation>
        <location evidence="5">Cell membrane</location>
        <topology evidence="5">Lipid-anchor</topology>
    </subcellularLocation>
</comment>
<comment type="similarity">
    <text evidence="3">Belongs to the thermonuclease family.</text>
</comment>
<comment type="sequence caution" evidence="5">
    <conflict type="miscellaneous discrepancy">
        <sequence resource="EMBL" id="AK064326"/>
    </conflict>
    <text>Sequencing errors.</text>
</comment>
<comment type="sequence caution" evidence="5">
    <conflict type="erroneous gene model prediction">
        <sequence resource="EMBL-CDS" id="BAF27398"/>
    </conflict>
</comment>
<evidence type="ECO:0000250" key="1"/>
<evidence type="ECO:0000255" key="2"/>
<evidence type="ECO:0000255" key="3">
    <source>
        <dbReference type="PROSITE-ProRule" id="PRU00272"/>
    </source>
</evidence>
<evidence type="ECO:0000256" key="4">
    <source>
        <dbReference type="SAM" id="MobiDB-lite"/>
    </source>
</evidence>
<evidence type="ECO:0000305" key="5"/>
<name>CAN2_ORYSJ</name>
<proteinExistence type="evidence at transcript level"/>
<reference key="1">
    <citation type="journal article" date="2005" name="BMC Biol.">
        <title>The sequence of rice chromosomes 11 and 12, rich in disease resistance genes and recent gene duplications.</title>
        <authorList>
            <consortium name="The rice chromosomes 11 and 12 sequencing consortia"/>
        </authorList>
    </citation>
    <scope>NUCLEOTIDE SEQUENCE [LARGE SCALE GENOMIC DNA]</scope>
    <source>
        <strain>cv. Nipponbare</strain>
    </source>
</reference>
<reference key="2">
    <citation type="journal article" date="2005" name="Nature">
        <title>The map-based sequence of the rice genome.</title>
        <authorList>
            <consortium name="International rice genome sequencing project (IRGSP)"/>
        </authorList>
    </citation>
    <scope>NUCLEOTIDE SEQUENCE [LARGE SCALE GENOMIC DNA]</scope>
    <source>
        <strain>cv. Nipponbare</strain>
    </source>
</reference>
<reference key="3">
    <citation type="journal article" date="2008" name="Nucleic Acids Res.">
        <title>The rice annotation project database (RAP-DB): 2008 update.</title>
        <authorList>
            <consortium name="The rice annotation project (RAP)"/>
        </authorList>
    </citation>
    <scope>GENOME REANNOTATION</scope>
    <source>
        <strain>cv. Nipponbare</strain>
    </source>
</reference>
<reference key="4">
    <citation type="journal article" date="2013" name="Rice">
        <title>Improvement of the Oryza sativa Nipponbare reference genome using next generation sequence and optical map data.</title>
        <authorList>
            <person name="Kawahara Y."/>
            <person name="de la Bastide M."/>
            <person name="Hamilton J.P."/>
            <person name="Kanamori H."/>
            <person name="McCombie W.R."/>
            <person name="Ouyang S."/>
            <person name="Schwartz D.C."/>
            <person name="Tanaka T."/>
            <person name="Wu J."/>
            <person name="Zhou S."/>
            <person name="Childs K.L."/>
            <person name="Davidson R.M."/>
            <person name="Lin H."/>
            <person name="Quesada-Ocampo L."/>
            <person name="Vaillancourt B."/>
            <person name="Sakai H."/>
            <person name="Lee S.S."/>
            <person name="Kim J."/>
            <person name="Numa H."/>
            <person name="Itoh T."/>
            <person name="Buell C.R."/>
            <person name="Matsumoto T."/>
        </authorList>
    </citation>
    <scope>GENOME REANNOTATION</scope>
    <source>
        <strain>cv. Nipponbare</strain>
    </source>
</reference>
<reference key="5">
    <citation type="journal article" date="2005" name="PLoS Biol.">
        <title>The genomes of Oryza sativa: a history of duplications.</title>
        <authorList>
            <person name="Yu J."/>
            <person name="Wang J."/>
            <person name="Lin W."/>
            <person name="Li S."/>
            <person name="Li H."/>
            <person name="Zhou J."/>
            <person name="Ni P."/>
            <person name="Dong W."/>
            <person name="Hu S."/>
            <person name="Zeng C."/>
            <person name="Zhang J."/>
            <person name="Zhang Y."/>
            <person name="Li R."/>
            <person name="Xu Z."/>
            <person name="Li S."/>
            <person name="Li X."/>
            <person name="Zheng H."/>
            <person name="Cong L."/>
            <person name="Lin L."/>
            <person name="Yin J."/>
            <person name="Geng J."/>
            <person name="Li G."/>
            <person name="Shi J."/>
            <person name="Liu J."/>
            <person name="Lv H."/>
            <person name="Li J."/>
            <person name="Wang J."/>
            <person name="Deng Y."/>
            <person name="Ran L."/>
            <person name="Shi X."/>
            <person name="Wang X."/>
            <person name="Wu Q."/>
            <person name="Li C."/>
            <person name="Ren X."/>
            <person name="Wang J."/>
            <person name="Wang X."/>
            <person name="Li D."/>
            <person name="Liu D."/>
            <person name="Zhang X."/>
            <person name="Ji Z."/>
            <person name="Zhao W."/>
            <person name="Sun Y."/>
            <person name="Zhang Z."/>
            <person name="Bao J."/>
            <person name="Han Y."/>
            <person name="Dong L."/>
            <person name="Ji J."/>
            <person name="Chen P."/>
            <person name="Wu S."/>
            <person name="Liu J."/>
            <person name="Xiao Y."/>
            <person name="Bu D."/>
            <person name="Tan J."/>
            <person name="Yang L."/>
            <person name="Ye C."/>
            <person name="Zhang J."/>
            <person name="Xu J."/>
            <person name="Zhou Y."/>
            <person name="Yu Y."/>
            <person name="Zhang B."/>
            <person name="Zhuang S."/>
            <person name="Wei H."/>
            <person name="Liu B."/>
            <person name="Lei M."/>
            <person name="Yu H."/>
            <person name="Li Y."/>
            <person name="Xu H."/>
            <person name="Wei S."/>
            <person name="He X."/>
            <person name="Fang L."/>
            <person name="Zhang Z."/>
            <person name="Zhang Y."/>
            <person name="Huang X."/>
            <person name="Su Z."/>
            <person name="Tong W."/>
            <person name="Li J."/>
            <person name="Tong Z."/>
            <person name="Li S."/>
            <person name="Ye J."/>
            <person name="Wang L."/>
            <person name="Fang L."/>
            <person name="Lei T."/>
            <person name="Chen C.-S."/>
            <person name="Chen H.-C."/>
            <person name="Xu Z."/>
            <person name="Li H."/>
            <person name="Huang H."/>
            <person name="Zhang F."/>
            <person name="Xu H."/>
            <person name="Li N."/>
            <person name="Zhao C."/>
            <person name="Li S."/>
            <person name="Dong L."/>
            <person name="Huang Y."/>
            <person name="Li L."/>
            <person name="Xi Y."/>
            <person name="Qi Q."/>
            <person name="Li W."/>
            <person name="Zhang B."/>
            <person name="Hu W."/>
            <person name="Zhang Y."/>
            <person name="Tian X."/>
            <person name="Jiao Y."/>
            <person name="Liang X."/>
            <person name="Jin J."/>
            <person name="Gao L."/>
            <person name="Zheng W."/>
            <person name="Hao B."/>
            <person name="Liu S.-M."/>
            <person name="Wang W."/>
            <person name="Yuan L."/>
            <person name="Cao M."/>
            <person name="McDermott J."/>
            <person name="Samudrala R."/>
            <person name="Wang J."/>
            <person name="Wong G.K.-S."/>
            <person name="Yang H."/>
        </authorList>
    </citation>
    <scope>NUCLEOTIDE SEQUENCE [LARGE SCALE GENOMIC DNA]</scope>
    <source>
        <strain>cv. Nipponbare</strain>
    </source>
</reference>
<reference key="6">
    <citation type="journal article" date="2003" name="Science">
        <title>Collection, mapping, and annotation of over 28,000 cDNA clones from japonica rice.</title>
        <authorList>
            <consortium name="The rice full-length cDNA consortium"/>
        </authorList>
    </citation>
    <scope>NUCLEOTIDE SEQUENCE [LARGE SCALE MRNA]</scope>
    <source>
        <strain>cv. Nipponbare</strain>
    </source>
</reference>
<feature type="initiator methionine" description="Removed" evidence="2">
    <location>
        <position position="1"/>
    </location>
</feature>
<feature type="chain" id="PRO_0000430201" description="Probable staphylococcal-like nuclease CAN2">
    <location>
        <begin position="2"/>
        <end position="368"/>
    </location>
</feature>
<feature type="domain" description="TNase-like" evidence="3">
    <location>
        <begin position="168"/>
        <end position="344"/>
    </location>
</feature>
<feature type="region of interest" description="Disordered" evidence="4">
    <location>
        <begin position="16"/>
        <end position="56"/>
    </location>
</feature>
<feature type="compositionally biased region" description="Low complexity" evidence="4">
    <location>
        <begin position="27"/>
        <end position="38"/>
    </location>
</feature>
<feature type="active site" evidence="3">
    <location>
        <position position="251"/>
    </location>
</feature>
<feature type="active site" evidence="3">
    <location>
        <position position="259"/>
    </location>
</feature>
<feature type="active site" evidence="3">
    <location>
        <position position="293"/>
    </location>
</feature>
<feature type="binding site" evidence="3">
    <location>
        <position position="181"/>
    </location>
    <ligand>
        <name>Ca(2+)</name>
        <dbReference type="ChEBI" id="CHEBI:29108"/>
    </ligand>
</feature>
<feature type="binding site" evidence="3">
    <location>
        <position position="256"/>
    </location>
    <ligand>
        <name>Ca(2+)</name>
        <dbReference type="ChEBI" id="CHEBI:29108"/>
    </ligand>
</feature>
<feature type="lipid moiety-binding region" description="N-myristoyl glycine" evidence="2">
    <location>
        <position position="2"/>
    </location>
</feature>
<feature type="lipid moiety-binding region" description="S-palmitoyl cysteine" evidence="2">
    <location>
        <position position="7"/>
    </location>
</feature>
<organism>
    <name type="scientific">Oryza sativa subsp. japonica</name>
    <name type="common">Rice</name>
    <dbReference type="NCBI Taxonomy" id="39947"/>
    <lineage>
        <taxon>Eukaryota</taxon>
        <taxon>Viridiplantae</taxon>
        <taxon>Streptophyta</taxon>
        <taxon>Embryophyta</taxon>
        <taxon>Tracheophyta</taxon>
        <taxon>Spermatophyta</taxon>
        <taxon>Magnoliopsida</taxon>
        <taxon>Liliopsida</taxon>
        <taxon>Poales</taxon>
        <taxon>Poaceae</taxon>
        <taxon>BOP clade</taxon>
        <taxon>Oryzoideae</taxon>
        <taxon>Oryzeae</taxon>
        <taxon>Oryzinae</taxon>
        <taxon>Oryza</taxon>
        <taxon>Oryza sativa</taxon>
    </lineage>
</organism>
<sequence length="368" mass="41542">MGNILRCFKGDDDGGDHYPYYKPTSRPHYQPPHYHGQPAAPPAPLQQQHLGPHGVTPSTVGVAALAHDLLNFESTSMVPDGLSQHVVSSRKAQVKWYQKLLEAYKNTTPPPKTPANAAQLIARALNMIQRADLEGILEFYNLPIPSLPTASSNYQPSLLPEGVQFVLNTLPVYDKCIGDGDGFTAYVPTTDPRESANVPLEVHELVIARTQARKCRDYQSADALLSSLDEAGYKIISCSDDEVLARKYRIRMRGIDAPELKMPYGKESRTALVKLIGGKSVKIYVYDLDQFGRYVGDIYCNNLFIQEQMLKNGHAWHFKTYDKRPEFARWEREARAANRGLWASGNPEKPWDWRRDQRNARQDAIQVY</sequence>
<keyword id="KW-0106">Calcium</keyword>
<keyword id="KW-1003">Cell membrane</keyword>
<keyword id="KW-0255">Endonuclease</keyword>
<keyword id="KW-0378">Hydrolase</keyword>
<keyword id="KW-0449">Lipoprotein</keyword>
<keyword id="KW-0472">Membrane</keyword>
<keyword id="KW-0479">Metal-binding</keyword>
<keyword id="KW-0519">Myristate</keyword>
<keyword id="KW-0540">Nuclease</keyword>
<keyword id="KW-0564">Palmitate</keyword>
<keyword id="KW-1185">Reference proteome</keyword>
<gene>
    <name type="ordered locus">Os11g0109500</name>
    <name type="ordered locus">LOC_Os11g01830</name>
    <name type="ORF">OsJ_32671</name>
    <name type="ORF">OSJNBa0010K05</name>
</gene>